<evidence type="ECO:0000255" key="1">
    <source>
        <dbReference type="HAMAP-Rule" id="MF_01551"/>
    </source>
</evidence>
<accession>Q9PFD0</accession>
<sequence>MSGLIAYCRQGFEPELAAELRDRAVLLGIAGDIHAQRNHGFVLLRCDPLHVDTLLQQLHWRRLIFARQTLRLHAELKTLNSRDRIAPILAALPKTPCFGDLWIEYPDSDMGKPLAGLARSFGNALRPVLRSAGRLSAQLHPQWPRLHVCFLSGDHVLLGSTRSVDSAPWQLGIPRLKLLPEAPSRSALKLEEALITLLTSNEREAKLRPGMRATDLGAAPGGWTWVLIRQHLRVTSIDNAVLRPSLLNHPLVQHVRADGFRWTPPRPMDWMVCDMVEQPRRVAERMAVWLREGWCRHMIFNLKLPMKKRWDETRLCLERFETQAVVPLTLRAKQLYHDREEITVYASNNAR</sequence>
<dbReference type="EC" id="2.1.1.186" evidence="1"/>
<dbReference type="EMBL" id="AE003849">
    <property type="protein sequence ID" value="AAF83558.1"/>
    <property type="molecule type" value="Genomic_DNA"/>
</dbReference>
<dbReference type="PIR" id="A82768">
    <property type="entry name" value="A82768"/>
</dbReference>
<dbReference type="RefSeq" id="WP_010893271.1">
    <property type="nucleotide sequence ID" value="NC_002488.3"/>
</dbReference>
<dbReference type="SMR" id="Q9PFD0"/>
<dbReference type="STRING" id="160492.XF_0748"/>
<dbReference type="KEGG" id="xfa:XF_0748"/>
<dbReference type="eggNOG" id="COG2933">
    <property type="taxonomic scope" value="Bacteria"/>
</dbReference>
<dbReference type="HOGENOM" id="CLU_043780_0_0_6"/>
<dbReference type="Proteomes" id="UP000000812">
    <property type="component" value="Chromosome"/>
</dbReference>
<dbReference type="GO" id="GO:0005737">
    <property type="term" value="C:cytoplasm"/>
    <property type="evidence" value="ECO:0007669"/>
    <property type="project" value="UniProtKB-SubCell"/>
</dbReference>
<dbReference type="GO" id="GO:0008757">
    <property type="term" value="F:S-adenosylmethionine-dependent methyltransferase activity"/>
    <property type="evidence" value="ECO:0007669"/>
    <property type="project" value="UniProtKB-UniRule"/>
</dbReference>
<dbReference type="GO" id="GO:0032259">
    <property type="term" value="P:methylation"/>
    <property type="evidence" value="ECO:0007669"/>
    <property type="project" value="UniProtKB-KW"/>
</dbReference>
<dbReference type="GO" id="GO:0006364">
    <property type="term" value="P:rRNA processing"/>
    <property type="evidence" value="ECO:0007669"/>
    <property type="project" value="UniProtKB-UniRule"/>
</dbReference>
<dbReference type="Gene3D" id="3.30.2300.20">
    <property type="match status" value="1"/>
</dbReference>
<dbReference type="Gene3D" id="3.30.70.2810">
    <property type="match status" value="1"/>
</dbReference>
<dbReference type="Gene3D" id="3.40.50.150">
    <property type="entry name" value="Vaccinia Virus protein VP39"/>
    <property type="match status" value="1"/>
</dbReference>
<dbReference type="HAMAP" id="MF_01551">
    <property type="entry name" value="23SrRNA_methyltr_M"/>
    <property type="match status" value="1"/>
</dbReference>
<dbReference type="InterPro" id="IPR040739">
    <property type="entry name" value="RlmM_FDX"/>
</dbReference>
<dbReference type="InterPro" id="IPR048646">
    <property type="entry name" value="RlmM_THUMP-like"/>
</dbReference>
<dbReference type="InterPro" id="IPR002877">
    <property type="entry name" value="RNA_MeTrfase_FtsJ_dom"/>
</dbReference>
<dbReference type="InterPro" id="IPR011224">
    <property type="entry name" value="rRNA_MeTrfase_M"/>
</dbReference>
<dbReference type="InterPro" id="IPR029063">
    <property type="entry name" value="SAM-dependent_MTases_sf"/>
</dbReference>
<dbReference type="NCBIfam" id="NF008734">
    <property type="entry name" value="PRK11760.1"/>
    <property type="match status" value="1"/>
</dbReference>
<dbReference type="PANTHER" id="PTHR37524">
    <property type="entry name" value="RIBOSOMAL RNA LARGE SUBUNIT METHYLTRANSFERASE M"/>
    <property type="match status" value="1"/>
</dbReference>
<dbReference type="PANTHER" id="PTHR37524:SF2">
    <property type="entry name" value="RIBOSOMAL RNA METHYLTRANSFERASE FTSJ DOMAIN-CONTAINING PROTEIN"/>
    <property type="match status" value="1"/>
</dbReference>
<dbReference type="Pfam" id="PF01728">
    <property type="entry name" value="FtsJ"/>
    <property type="match status" value="1"/>
</dbReference>
<dbReference type="Pfam" id="PF18125">
    <property type="entry name" value="RlmM_FDX"/>
    <property type="match status" value="1"/>
</dbReference>
<dbReference type="Pfam" id="PF21239">
    <property type="entry name" value="RLMM_N"/>
    <property type="match status" value="1"/>
</dbReference>
<dbReference type="PIRSF" id="PIRSF028774">
    <property type="entry name" value="UCP028774"/>
    <property type="match status" value="1"/>
</dbReference>
<dbReference type="SUPFAM" id="SSF53335">
    <property type="entry name" value="S-adenosyl-L-methionine-dependent methyltransferases"/>
    <property type="match status" value="1"/>
</dbReference>
<gene>
    <name evidence="1" type="primary">rlmM</name>
    <name type="ordered locus">XF_0748</name>
</gene>
<protein>
    <recommendedName>
        <fullName evidence="1">Ribosomal RNA large subunit methyltransferase M</fullName>
        <ecNumber evidence="1">2.1.1.186</ecNumber>
    </recommendedName>
    <alternativeName>
        <fullName evidence="1">23S rRNA (cytidine2498-2'-O)-methyltransferase</fullName>
    </alternativeName>
    <alternativeName>
        <fullName evidence="1">23S rRNA 2'-O-ribose methyltransferase RlmM</fullName>
    </alternativeName>
</protein>
<proteinExistence type="inferred from homology"/>
<comment type="function">
    <text evidence="1">Catalyzes the 2'-O-methylation at nucleotide C2498 in 23S rRNA.</text>
</comment>
<comment type="catalytic activity">
    <reaction evidence="1">
        <text>cytidine(2498) in 23S rRNA + S-adenosyl-L-methionine = 2'-O-methylcytidine(2498) in 23S rRNA + S-adenosyl-L-homocysteine + H(+)</text>
        <dbReference type="Rhea" id="RHEA:42788"/>
        <dbReference type="Rhea" id="RHEA-COMP:10244"/>
        <dbReference type="Rhea" id="RHEA-COMP:10245"/>
        <dbReference type="ChEBI" id="CHEBI:15378"/>
        <dbReference type="ChEBI" id="CHEBI:57856"/>
        <dbReference type="ChEBI" id="CHEBI:59789"/>
        <dbReference type="ChEBI" id="CHEBI:74495"/>
        <dbReference type="ChEBI" id="CHEBI:82748"/>
        <dbReference type="EC" id="2.1.1.186"/>
    </reaction>
</comment>
<comment type="subunit">
    <text evidence="1">Monomer.</text>
</comment>
<comment type="subcellular location">
    <subcellularLocation>
        <location evidence="1">Cytoplasm</location>
    </subcellularLocation>
</comment>
<comment type="similarity">
    <text evidence="1">Belongs to the class I-like SAM-binding methyltransferase superfamily. RNA methyltransferase RlmE family. RlmM subfamily.</text>
</comment>
<organism>
    <name type="scientific">Xylella fastidiosa (strain 9a5c)</name>
    <dbReference type="NCBI Taxonomy" id="160492"/>
    <lineage>
        <taxon>Bacteria</taxon>
        <taxon>Pseudomonadati</taxon>
        <taxon>Pseudomonadota</taxon>
        <taxon>Gammaproteobacteria</taxon>
        <taxon>Lysobacterales</taxon>
        <taxon>Lysobacteraceae</taxon>
        <taxon>Xylella</taxon>
    </lineage>
</organism>
<keyword id="KW-0963">Cytoplasm</keyword>
<keyword id="KW-0489">Methyltransferase</keyword>
<keyword id="KW-0698">rRNA processing</keyword>
<keyword id="KW-0949">S-adenosyl-L-methionine</keyword>
<keyword id="KW-0808">Transferase</keyword>
<feature type="chain" id="PRO_0000070437" description="Ribosomal RNA large subunit methyltransferase M">
    <location>
        <begin position="1"/>
        <end position="351"/>
    </location>
</feature>
<feature type="active site" description="Proton acceptor" evidence="1">
    <location>
        <position position="303"/>
    </location>
</feature>
<feature type="binding site" evidence="1">
    <location>
        <position position="186"/>
    </location>
    <ligand>
        <name>S-adenosyl-L-methionine</name>
        <dbReference type="ChEBI" id="CHEBI:59789"/>
    </ligand>
</feature>
<feature type="binding site" evidence="1">
    <location>
        <begin position="219"/>
        <end position="222"/>
    </location>
    <ligand>
        <name>S-adenosyl-L-methionine</name>
        <dbReference type="ChEBI" id="CHEBI:59789"/>
    </ligand>
</feature>
<feature type="binding site" evidence="1">
    <location>
        <position position="238"/>
    </location>
    <ligand>
        <name>S-adenosyl-L-methionine</name>
        <dbReference type="ChEBI" id="CHEBI:59789"/>
    </ligand>
</feature>
<feature type="binding site" evidence="1">
    <location>
        <position position="258"/>
    </location>
    <ligand>
        <name>S-adenosyl-L-methionine</name>
        <dbReference type="ChEBI" id="CHEBI:59789"/>
    </ligand>
</feature>
<feature type="binding site" evidence="1">
    <location>
        <position position="274"/>
    </location>
    <ligand>
        <name>S-adenosyl-L-methionine</name>
        <dbReference type="ChEBI" id="CHEBI:59789"/>
    </ligand>
</feature>
<name>RLMM_XYLFA</name>
<reference key="1">
    <citation type="journal article" date="2000" name="Nature">
        <title>The genome sequence of the plant pathogen Xylella fastidiosa.</title>
        <authorList>
            <person name="Simpson A.J.G."/>
            <person name="Reinach F.C."/>
            <person name="Arruda P."/>
            <person name="Abreu F.A."/>
            <person name="Acencio M."/>
            <person name="Alvarenga R."/>
            <person name="Alves L.M.C."/>
            <person name="Araya J.E."/>
            <person name="Baia G.S."/>
            <person name="Baptista C.S."/>
            <person name="Barros M.H."/>
            <person name="Bonaccorsi E.D."/>
            <person name="Bordin S."/>
            <person name="Bove J.M."/>
            <person name="Briones M.R.S."/>
            <person name="Bueno M.R.P."/>
            <person name="Camargo A.A."/>
            <person name="Camargo L.E.A."/>
            <person name="Carraro D.M."/>
            <person name="Carrer H."/>
            <person name="Colauto N.B."/>
            <person name="Colombo C."/>
            <person name="Costa F.F."/>
            <person name="Costa M.C.R."/>
            <person name="Costa-Neto C.M."/>
            <person name="Coutinho L.L."/>
            <person name="Cristofani M."/>
            <person name="Dias-Neto E."/>
            <person name="Docena C."/>
            <person name="El-Dorry H."/>
            <person name="Facincani A.P."/>
            <person name="Ferreira A.J.S."/>
            <person name="Ferreira V.C.A."/>
            <person name="Ferro J.A."/>
            <person name="Fraga J.S."/>
            <person name="Franca S.C."/>
            <person name="Franco M.C."/>
            <person name="Frohme M."/>
            <person name="Furlan L.R."/>
            <person name="Garnier M."/>
            <person name="Goldman G.H."/>
            <person name="Goldman M.H.S."/>
            <person name="Gomes S.L."/>
            <person name="Gruber A."/>
            <person name="Ho P.L."/>
            <person name="Hoheisel J.D."/>
            <person name="Junqueira M.L."/>
            <person name="Kemper E.L."/>
            <person name="Kitajima J.P."/>
            <person name="Krieger J.E."/>
            <person name="Kuramae E.E."/>
            <person name="Laigret F."/>
            <person name="Lambais M.R."/>
            <person name="Leite L.C.C."/>
            <person name="Lemos E.G.M."/>
            <person name="Lemos M.V.F."/>
            <person name="Lopes S.A."/>
            <person name="Lopes C.R."/>
            <person name="Machado J.A."/>
            <person name="Machado M.A."/>
            <person name="Madeira A.M.B.N."/>
            <person name="Madeira H.M.F."/>
            <person name="Marino C.L."/>
            <person name="Marques M.V."/>
            <person name="Martins E.A.L."/>
            <person name="Martins E.M.F."/>
            <person name="Matsukuma A.Y."/>
            <person name="Menck C.F.M."/>
            <person name="Miracca E.C."/>
            <person name="Miyaki C.Y."/>
            <person name="Monteiro-Vitorello C.B."/>
            <person name="Moon D.H."/>
            <person name="Nagai M.A."/>
            <person name="Nascimento A.L.T.O."/>
            <person name="Netto L.E.S."/>
            <person name="Nhani A. Jr."/>
            <person name="Nobrega F.G."/>
            <person name="Nunes L.R."/>
            <person name="Oliveira M.A."/>
            <person name="de Oliveira M.C."/>
            <person name="de Oliveira R.C."/>
            <person name="Palmieri D.A."/>
            <person name="Paris A."/>
            <person name="Peixoto B.R."/>
            <person name="Pereira G.A.G."/>
            <person name="Pereira H.A. Jr."/>
            <person name="Pesquero J.B."/>
            <person name="Quaggio R.B."/>
            <person name="Roberto P.G."/>
            <person name="Rodrigues V."/>
            <person name="de Rosa A.J.M."/>
            <person name="de Rosa V.E. Jr."/>
            <person name="de Sa R.G."/>
            <person name="Santelli R.V."/>
            <person name="Sawasaki H.E."/>
            <person name="da Silva A.C.R."/>
            <person name="da Silva A.M."/>
            <person name="da Silva F.R."/>
            <person name="Silva W.A. Jr."/>
            <person name="da Silveira J.F."/>
            <person name="Silvestri M.L.Z."/>
            <person name="Siqueira W.J."/>
            <person name="de Souza A.A."/>
            <person name="de Souza A.P."/>
            <person name="Terenzi M.F."/>
            <person name="Truffi D."/>
            <person name="Tsai S.M."/>
            <person name="Tsuhako M.H."/>
            <person name="Vallada H."/>
            <person name="Van Sluys M.A."/>
            <person name="Verjovski-Almeida S."/>
            <person name="Vettore A.L."/>
            <person name="Zago M.A."/>
            <person name="Zatz M."/>
            <person name="Meidanis J."/>
            <person name="Setubal J.C."/>
        </authorList>
    </citation>
    <scope>NUCLEOTIDE SEQUENCE [LARGE SCALE GENOMIC DNA]</scope>
    <source>
        <strain>9a5c</strain>
    </source>
</reference>